<gene>
    <name type="ORF">SPCC1183.03c</name>
</gene>
<dbReference type="EC" id="1.16.3.1"/>
<dbReference type="EMBL" id="CU329672">
    <property type="protein sequence ID" value="CAA21083.1"/>
    <property type="molecule type" value="Genomic_DNA"/>
</dbReference>
<dbReference type="PIR" id="T40843">
    <property type="entry name" value="T40843"/>
</dbReference>
<dbReference type="SMR" id="O74831"/>
<dbReference type="BioGRID" id="275715">
    <property type="interactions" value="1"/>
</dbReference>
<dbReference type="FunCoup" id="O74831">
    <property type="interactions" value="221"/>
</dbReference>
<dbReference type="STRING" id="284812.O74831"/>
<dbReference type="iPTMnet" id="O74831"/>
<dbReference type="PaxDb" id="4896-SPCC1183.03c.1"/>
<dbReference type="EnsemblFungi" id="SPCC1183.03c.1">
    <property type="protein sequence ID" value="SPCC1183.03c.1:pep"/>
    <property type="gene ID" value="SPCC1183.03c"/>
</dbReference>
<dbReference type="KEGG" id="spo:2539143"/>
<dbReference type="PomBase" id="SPCC1183.03c"/>
<dbReference type="VEuPathDB" id="FungiDB:SPCC1183.03c"/>
<dbReference type="eggNOG" id="KOG3413">
    <property type="taxonomic scope" value="Eukaryota"/>
</dbReference>
<dbReference type="HOGENOM" id="CLU_080880_4_0_1"/>
<dbReference type="InParanoid" id="O74831"/>
<dbReference type="OMA" id="YEVEYHS"/>
<dbReference type="PhylomeDB" id="O74831"/>
<dbReference type="Reactome" id="R-SPO-1268020">
    <property type="pathway name" value="Mitochondrial protein import"/>
</dbReference>
<dbReference type="Reactome" id="R-SPO-1362409">
    <property type="pathway name" value="Mitochondrial iron-sulfur cluster biogenesis"/>
</dbReference>
<dbReference type="Reactome" id="R-SPO-9854311">
    <property type="pathway name" value="Maturation of TCA enzymes and regulation of TCA cycle"/>
</dbReference>
<dbReference type="Reactome" id="R-SPO-9865881">
    <property type="pathway name" value="Complex III assembly"/>
</dbReference>
<dbReference type="PRO" id="PR:O74831"/>
<dbReference type="Proteomes" id="UP000002485">
    <property type="component" value="Chromosome III"/>
</dbReference>
<dbReference type="GO" id="GO:0099128">
    <property type="term" value="C:mitochondrial [2Fe-2S] assembly complex"/>
    <property type="evidence" value="ECO:0000304"/>
    <property type="project" value="PomBase"/>
</dbReference>
<dbReference type="GO" id="GO:0005759">
    <property type="term" value="C:mitochondrial matrix"/>
    <property type="evidence" value="ECO:0000250"/>
    <property type="project" value="PomBase"/>
</dbReference>
<dbReference type="GO" id="GO:0005739">
    <property type="term" value="C:mitochondrion"/>
    <property type="evidence" value="ECO:0000314"/>
    <property type="project" value="PomBase"/>
</dbReference>
<dbReference type="GO" id="GO:0051537">
    <property type="term" value="F:2 iron, 2 sulfur cluster binding"/>
    <property type="evidence" value="ECO:0000318"/>
    <property type="project" value="GO_Central"/>
</dbReference>
<dbReference type="GO" id="GO:0008199">
    <property type="term" value="F:ferric iron binding"/>
    <property type="evidence" value="ECO:0000318"/>
    <property type="project" value="GO_Central"/>
</dbReference>
<dbReference type="GO" id="GO:0008198">
    <property type="term" value="F:ferrous iron binding"/>
    <property type="evidence" value="ECO:0000318"/>
    <property type="project" value="GO_Central"/>
</dbReference>
<dbReference type="GO" id="GO:0004322">
    <property type="term" value="F:ferroxidase activity"/>
    <property type="evidence" value="ECO:0000318"/>
    <property type="project" value="GO_Central"/>
</dbReference>
<dbReference type="GO" id="GO:0034986">
    <property type="term" value="F:iron chaperone activity"/>
    <property type="evidence" value="ECO:0000318"/>
    <property type="project" value="GO_Central"/>
</dbReference>
<dbReference type="GO" id="GO:0044571">
    <property type="term" value="P:[2Fe-2S] cluster assembly"/>
    <property type="evidence" value="ECO:0000305"/>
    <property type="project" value="PomBase"/>
</dbReference>
<dbReference type="GO" id="GO:0006783">
    <property type="term" value="P:heme biosynthetic process"/>
    <property type="evidence" value="ECO:0000266"/>
    <property type="project" value="PomBase"/>
</dbReference>
<dbReference type="GO" id="GO:0006879">
    <property type="term" value="P:intracellular iron ion homeostasis"/>
    <property type="evidence" value="ECO:0007669"/>
    <property type="project" value="UniProtKB-KW"/>
</dbReference>
<dbReference type="GO" id="GO:0006826">
    <property type="term" value="P:iron ion transport"/>
    <property type="evidence" value="ECO:0007669"/>
    <property type="project" value="UniProtKB-KW"/>
</dbReference>
<dbReference type="GO" id="GO:0016226">
    <property type="term" value="P:iron-sulfur cluster assembly"/>
    <property type="evidence" value="ECO:0000318"/>
    <property type="project" value="GO_Central"/>
</dbReference>
<dbReference type="CDD" id="cd00503">
    <property type="entry name" value="Frataxin"/>
    <property type="match status" value="1"/>
</dbReference>
<dbReference type="Gene3D" id="3.30.920.10">
    <property type="entry name" value="Frataxin/CyaY"/>
    <property type="match status" value="1"/>
</dbReference>
<dbReference type="InterPro" id="IPR017789">
    <property type="entry name" value="Frataxin"/>
</dbReference>
<dbReference type="InterPro" id="IPR002908">
    <property type="entry name" value="Frataxin/CyaY"/>
</dbReference>
<dbReference type="InterPro" id="IPR036524">
    <property type="entry name" value="Frataxin/CyaY_sf"/>
</dbReference>
<dbReference type="InterPro" id="IPR020895">
    <property type="entry name" value="Frataxin_CS"/>
</dbReference>
<dbReference type="NCBIfam" id="TIGR03421">
    <property type="entry name" value="FeS_CyaY"/>
    <property type="match status" value="1"/>
</dbReference>
<dbReference type="NCBIfam" id="TIGR03422">
    <property type="entry name" value="mito_frataxin"/>
    <property type="match status" value="1"/>
</dbReference>
<dbReference type="PANTHER" id="PTHR16821">
    <property type="entry name" value="FRATAXIN"/>
    <property type="match status" value="1"/>
</dbReference>
<dbReference type="PANTHER" id="PTHR16821:SF2">
    <property type="entry name" value="FRATAXIN, MITOCHONDRIAL"/>
    <property type="match status" value="1"/>
</dbReference>
<dbReference type="Pfam" id="PF01491">
    <property type="entry name" value="Frataxin_Cyay"/>
    <property type="match status" value="1"/>
</dbReference>
<dbReference type="PRINTS" id="PR00904">
    <property type="entry name" value="FRATAXIN"/>
</dbReference>
<dbReference type="SMART" id="SM01219">
    <property type="entry name" value="Frataxin_Cyay"/>
    <property type="match status" value="1"/>
</dbReference>
<dbReference type="SUPFAM" id="SSF55387">
    <property type="entry name" value="Frataxin/Nqo15-like"/>
    <property type="match status" value="1"/>
</dbReference>
<dbReference type="PROSITE" id="PS01344">
    <property type="entry name" value="FRATAXIN_1"/>
    <property type="match status" value="1"/>
</dbReference>
<dbReference type="PROSITE" id="PS50810">
    <property type="entry name" value="FRATAXIN_2"/>
    <property type="match status" value="1"/>
</dbReference>
<reference key="1">
    <citation type="journal article" date="2002" name="Nature">
        <title>The genome sequence of Schizosaccharomyces pombe.</title>
        <authorList>
            <person name="Wood V."/>
            <person name="Gwilliam R."/>
            <person name="Rajandream M.A."/>
            <person name="Lyne M.H."/>
            <person name="Lyne R."/>
            <person name="Stewart A."/>
            <person name="Sgouros J.G."/>
            <person name="Peat N."/>
            <person name="Hayles J."/>
            <person name="Baker S.G."/>
            <person name="Basham D."/>
            <person name="Bowman S."/>
            <person name="Brooks K."/>
            <person name="Brown D."/>
            <person name="Brown S."/>
            <person name="Chillingworth T."/>
            <person name="Churcher C.M."/>
            <person name="Collins M."/>
            <person name="Connor R."/>
            <person name="Cronin A."/>
            <person name="Davis P."/>
            <person name="Feltwell T."/>
            <person name="Fraser A."/>
            <person name="Gentles S."/>
            <person name="Goble A."/>
            <person name="Hamlin N."/>
            <person name="Harris D.E."/>
            <person name="Hidalgo J."/>
            <person name="Hodgson G."/>
            <person name="Holroyd S."/>
            <person name="Hornsby T."/>
            <person name="Howarth S."/>
            <person name="Huckle E.J."/>
            <person name="Hunt S."/>
            <person name="Jagels K."/>
            <person name="James K.D."/>
            <person name="Jones L."/>
            <person name="Jones M."/>
            <person name="Leather S."/>
            <person name="McDonald S."/>
            <person name="McLean J."/>
            <person name="Mooney P."/>
            <person name="Moule S."/>
            <person name="Mungall K.L."/>
            <person name="Murphy L.D."/>
            <person name="Niblett D."/>
            <person name="Odell C."/>
            <person name="Oliver K."/>
            <person name="O'Neil S."/>
            <person name="Pearson D."/>
            <person name="Quail M.A."/>
            <person name="Rabbinowitsch E."/>
            <person name="Rutherford K.M."/>
            <person name="Rutter S."/>
            <person name="Saunders D."/>
            <person name="Seeger K."/>
            <person name="Sharp S."/>
            <person name="Skelton J."/>
            <person name="Simmonds M.N."/>
            <person name="Squares R."/>
            <person name="Squares S."/>
            <person name="Stevens K."/>
            <person name="Taylor K."/>
            <person name="Taylor R.G."/>
            <person name="Tivey A."/>
            <person name="Walsh S.V."/>
            <person name="Warren T."/>
            <person name="Whitehead S."/>
            <person name="Woodward J.R."/>
            <person name="Volckaert G."/>
            <person name="Aert R."/>
            <person name="Robben J."/>
            <person name="Grymonprez B."/>
            <person name="Weltjens I."/>
            <person name="Vanstreels E."/>
            <person name="Rieger M."/>
            <person name="Schaefer M."/>
            <person name="Mueller-Auer S."/>
            <person name="Gabel C."/>
            <person name="Fuchs M."/>
            <person name="Duesterhoeft A."/>
            <person name="Fritzc C."/>
            <person name="Holzer E."/>
            <person name="Moestl D."/>
            <person name="Hilbert H."/>
            <person name="Borzym K."/>
            <person name="Langer I."/>
            <person name="Beck A."/>
            <person name="Lehrach H."/>
            <person name="Reinhardt R."/>
            <person name="Pohl T.M."/>
            <person name="Eger P."/>
            <person name="Zimmermann W."/>
            <person name="Wedler H."/>
            <person name="Wambutt R."/>
            <person name="Purnelle B."/>
            <person name="Goffeau A."/>
            <person name="Cadieu E."/>
            <person name="Dreano S."/>
            <person name="Gloux S."/>
            <person name="Lelaure V."/>
            <person name="Mottier S."/>
            <person name="Galibert F."/>
            <person name="Aves S.J."/>
            <person name="Xiang Z."/>
            <person name="Hunt C."/>
            <person name="Moore K."/>
            <person name="Hurst S.M."/>
            <person name="Lucas M."/>
            <person name="Rochet M."/>
            <person name="Gaillardin C."/>
            <person name="Tallada V.A."/>
            <person name="Garzon A."/>
            <person name="Thode G."/>
            <person name="Daga R.R."/>
            <person name="Cruzado L."/>
            <person name="Jimenez J."/>
            <person name="Sanchez M."/>
            <person name="del Rey F."/>
            <person name="Benito J."/>
            <person name="Dominguez A."/>
            <person name="Revuelta J.L."/>
            <person name="Moreno S."/>
            <person name="Armstrong J."/>
            <person name="Forsburg S.L."/>
            <person name="Cerutti L."/>
            <person name="Lowe T."/>
            <person name="McCombie W.R."/>
            <person name="Paulsen I."/>
            <person name="Potashkin J."/>
            <person name="Shpakovski G.V."/>
            <person name="Ussery D."/>
            <person name="Barrell B.G."/>
            <person name="Nurse P."/>
        </authorList>
    </citation>
    <scope>NUCLEOTIDE SEQUENCE [LARGE SCALE GENOMIC DNA]</scope>
    <source>
        <strain>972 / ATCC 24843</strain>
    </source>
</reference>
<sequence length="158" mass="18387">MQSLRAAFRRRTPIFLKPYEFSTNVFGLRCRYYSQVRHNGALTDLEYHRVADDTLDVLNDTFEDLLEEVGKKDYDIQYANGVITLMLGEKGTYVINKQPPAHQIWLSSPVSGPKHYEYSLKSKTWCSTRDEGTLLGILSSEFSKWFSRPIEFKKSEDF</sequence>
<evidence type="ECO:0000250" key="1"/>
<evidence type="ECO:0000305" key="2"/>
<protein>
    <recommendedName>
        <fullName>Frataxin homolog, mitochondrial</fullName>
        <ecNumber>1.16.3.1</ecNumber>
    </recommendedName>
</protein>
<proteinExistence type="inferred from homology"/>
<keyword id="KW-0350">Heme biosynthesis</keyword>
<keyword id="KW-0406">Ion transport</keyword>
<keyword id="KW-0408">Iron</keyword>
<keyword id="KW-0409">Iron storage</keyword>
<keyword id="KW-0410">Iron transport</keyword>
<keyword id="KW-0496">Mitochondrion</keyword>
<keyword id="KW-0560">Oxidoreductase</keyword>
<keyword id="KW-1185">Reference proteome</keyword>
<keyword id="KW-0809">Transit peptide</keyword>
<keyword id="KW-0813">Transport</keyword>
<comment type="function">
    <text evidence="1">Promotes the biosynthesis of heme as well as the assembly and repair of iron-sulfur clusters by delivering Fe(2+) to proteins involved in these pathways. May play a role in the protection against iron-catalyzed oxidative stress through its ability to catalyze the oxidation of Fe(2+) to Fe(3+). May be able to store large amounts of the metal in the form of a ferrihydrite mineral by oligomerization (By similarity).</text>
</comment>
<comment type="catalytic activity">
    <reaction>
        <text>4 Fe(2+) + O2 + 4 H(+) = 4 Fe(3+) + 2 H2O</text>
        <dbReference type="Rhea" id="RHEA:11148"/>
        <dbReference type="ChEBI" id="CHEBI:15377"/>
        <dbReference type="ChEBI" id="CHEBI:15378"/>
        <dbReference type="ChEBI" id="CHEBI:15379"/>
        <dbReference type="ChEBI" id="CHEBI:29033"/>
        <dbReference type="ChEBI" id="CHEBI:29034"/>
        <dbReference type="EC" id="1.16.3.1"/>
    </reaction>
</comment>
<comment type="subunit">
    <text evidence="1">Monomer. Oligomer (By similarity).</text>
</comment>
<comment type="subcellular location">
    <subcellularLocation>
        <location evidence="1">Mitochondrion</location>
    </subcellularLocation>
</comment>
<comment type="similarity">
    <text evidence="2">Belongs to the frataxin family.</text>
</comment>
<accession>O74831</accession>
<name>FRDA_SCHPO</name>
<feature type="transit peptide" description="Mitochondrion">
    <location>
        <begin position="1"/>
        <end status="unknown"/>
    </location>
</feature>
<feature type="chain" id="PRO_0000010134" description="Frataxin homolog, mitochondrial">
    <location>
        <begin status="unknown"/>
        <end position="158"/>
    </location>
</feature>
<organism>
    <name type="scientific">Schizosaccharomyces pombe (strain 972 / ATCC 24843)</name>
    <name type="common">Fission yeast</name>
    <dbReference type="NCBI Taxonomy" id="284812"/>
    <lineage>
        <taxon>Eukaryota</taxon>
        <taxon>Fungi</taxon>
        <taxon>Dikarya</taxon>
        <taxon>Ascomycota</taxon>
        <taxon>Taphrinomycotina</taxon>
        <taxon>Schizosaccharomycetes</taxon>
        <taxon>Schizosaccharomycetales</taxon>
        <taxon>Schizosaccharomycetaceae</taxon>
        <taxon>Schizosaccharomyces</taxon>
    </lineage>
</organism>